<name>LIPT_BOVIN</name>
<accession>O46419</accession>
<keyword id="KW-0002">3D-structure</keyword>
<keyword id="KW-0012">Acyltransferase</keyword>
<keyword id="KW-0903">Direct protein sequencing</keyword>
<keyword id="KW-0496">Mitochondrion</keyword>
<keyword id="KW-1185">Reference proteome</keyword>
<keyword id="KW-0808">Transferase</keyword>
<keyword id="KW-0809">Transit peptide</keyword>
<gene>
    <name type="primary">LIPT1</name>
</gene>
<comment type="function">
    <text evidence="1 3 4 5">Lipoyl amidotransferase that catalyzes the transfer of lipoyl moieties from lipoyl-protein H of the glycine cleavage system (lipoyl-GCSH) to E2 subunits of the pyruvate dehydrogenase complex (PDCE2). Unable to catalyze the transfer of octanoyl from octanoyl-GCSH to PDCE2 (By similarity). In vitro, it is also able to catalyze the transfer of the lipoyl group from lipoyl-AMP to the specific lysine residue of lipoyl domains of lipoate-dependent enzymes but this reaction may not be physiologically relevant (Probable) (PubMed:8206978).</text>
</comment>
<comment type="catalytic activity">
    <reaction evidence="1">
        <text>N(6)-[(R)-lipoyl]-L-lysyl-[glycine-cleavage complex H protein] + L-lysyl-[lipoyl-carrier protein] = L-lysyl-[glycine-cleavage complex H protein] + N(6)-[(R)-lipoyl]-L-lysyl-[lipoyl-carrier protein]</text>
        <dbReference type="Rhea" id="RHEA:16413"/>
        <dbReference type="Rhea" id="RHEA-COMP:10494"/>
        <dbReference type="Rhea" id="RHEA-COMP:10500"/>
        <dbReference type="Rhea" id="RHEA-COMP:10501"/>
        <dbReference type="Rhea" id="RHEA-COMP:10502"/>
        <dbReference type="ChEBI" id="CHEBI:29969"/>
        <dbReference type="ChEBI" id="CHEBI:83099"/>
        <dbReference type="EC" id="2.3.1.200"/>
    </reaction>
    <physiologicalReaction direction="left-to-right" evidence="1">
        <dbReference type="Rhea" id="RHEA:16414"/>
    </physiologicalReaction>
</comment>
<comment type="catalytic activity">
    <reaction evidence="3 4">
        <text>(R)-lipoyl-5'-AMP + L-lysyl-[lipoyl-carrier protein] = N(6)-[(R)-lipoyl]-L-lysyl-[lipoyl-carrier protein] + AMP + 2 H(+)</text>
        <dbReference type="Rhea" id="RHEA:20473"/>
        <dbReference type="Rhea" id="RHEA-COMP:10500"/>
        <dbReference type="Rhea" id="RHEA-COMP:10502"/>
        <dbReference type="ChEBI" id="CHEBI:15378"/>
        <dbReference type="ChEBI" id="CHEBI:29969"/>
        <dbReference type="ChEBI" id="CHEBI:83091"/>
        <dbReference type="ChEBI" id="CHEBI:83099"/>
        <dbReference type="ChEBI" id="CHEBI:456215"/>
    </reaction>
</comment>
<comment type="activity regulation">
    <text evidence="4">Inhibited by lipoyl-AMP analogs including hexanoyl-, octanoyl- and decanoyl-AMP.</text>
</comment>
<comment type="biophysicochemical properties">
    <kinetics>
        <KM evidence="4">13 uM for (R)-lipoyl-5'-AMP</KM>
        <Vmax evidence="4">135.0 nmol/min/mg enzyme for the reaction with (R)-lipoyl-5'-AMP as lipoyl donor</Vmax>
    </kinetics>
    <phDependence>
        <text evidence="4">Optimum pH is 7.9.</text>
    </phDependence>
</comment>
<comment type="pathway">
    <text>Protein modification; protein lipoylation via exogenous pathway; protein N(6)-(lipoyl)lysine from lipoate: step 2/2.</text>
</comment>
<comment type="subcellular location">
    <subcellularLocation>
        <location evidence="6">Mitochondrion</location>
    </subcellularLocation>
</comment>
<comment type="similarity">
    <text evidence="5">Belongs to the LplA family.</text>
</comment>
<proteinExistence type="evidence at protein level"/>
<reference key="1">
    <citation type="journal article" date="1997" name="J. Biol. Chem.">
        <title>Cloning and expression of a cDNA encoding bovine lipoyltransferase.</title>
        <authorList>
            <person name="Fujiwara K."/>
            <person name="Okamura-Ikeda K."/>
            <person name="Motokawa Y."/>
        </authorList>
    </citation>
    <scope>NUCLEOTIDE SEQUENCE [MRNA]</scope>
    <scope>PARTIAL PROTEIN SEQUENCE</scope>
    <source>
        <tissue>Liver</tissue>
    </source>
</reference>
<reference key="2">
    <citation type="journal article" date="1994" name="J. Biol. Chem.">
        <title>Purification and characterization of lipoyl-AMP:N epsilon-lysine lipoyltransferase from bovine liver mitochondria.</title>
        <authorList>
            <person name="Fujiwara K."/>
            <person name="Okamura-Ikeda K."/>
            <person name="Motokawa Y."/>
        </authorList>
    </citation>
    <scope>FUNCTION</scope>
    <scope>CATALYTIC ACTIVITY</scope>
    <scope>BIOPHYSICOCHEMICAL PROPERTIES</scope>
    <scope>ACTIVITY REGULATION</scope>
</reference>
<reference key="3">
    <citation type="journal article" date="2007" name="J. Mol. Biol.">
        <title>Crystal structure of bovine lipoyltransferase in complex with lipoyl-AMP.</title>
        <authorList>
            <person name="Fujiwara K."/>
            <person name="Hosaka H."/>
            <person name="Matsuda M."/>
            <person name="Okamura-Ikeda K."/>
            <person name="Motokawa Y."/>
            <person name="Suzuki M."/>
            <person name="Nakagawa A."/>
            <person name="Taniguchi H."/>
        </authorList>
    </citation>
    <scope>X-RAY CRYSTALLOGRAPHY (2.1 ANGSTROMS) OF 27-373 IN COMPLEX WITH LIPOYL-AMP</scope>
    <scope>FUNCTION</scope>
    <scope>CATALYTIC ACTIVITY</scope>
</reference>
<sequence>MLIPFSMKNCFQLLCNLKVPAAGFKNTVKSGLILQSISNDVYHNLAVEDWIHDHMNLEGKPVLFLWRNSPTVVIGRHQNPWQECNLNLMREEGVKLARRRSGGGTVYHDMGNINLTFFTTKKKYDRMENLKLVVRALKAVHPHLDVQATKRFDLLLDGQFKISGTASKIGRNAAYHHCTLLCGTDGTFLSSLLKSPYQGIRSNATASTPALVKNLMEKDPTLTCEVVINAVATEYATSHQIDNHIHLINPTDETVFPGINSKAIELQTWEWIYGKTPKFSVDTSFTVLHEQSHVEIKVFIDVKNGRIEVCNIEAPDHWLPLEICDQLNSSLIGSKFSPIETTVLTSILHRTYPGDDELHSKWNILCEKIKGIM</sequence>
<organism>
    <name type="scientific">Bos taurus</name>
    <name type="common">Bovine</name>
    <dbReference type="NCBI Taxonomy" id="9913"/>
    <lineage>
        <taxon>Eukaryota</taxon>
        <taxon>Metazoa</taxon>
        <taxon>Chordata</taxon>
        <taxon>Craniata</taxon>
        <taxon>Vertebrata</taxon>
        <taxon>Euteleostomi</taxon>
        <taxon>Mammalia</taxon>
        <taxon>Eutheria</taxon>
        <taxon>Laurasiatheria</taxon>
        <taxon>Artiodactyla</taxon>
        <taxon>Ruminantia</taxon>
        <taxon>Pecora</taxon>
        <taxon>Bovidae</taxon>
        <taxon>Bovinae</taxon>
        <taxon>Bos</taxon>
    </lineage>
</organism>
<dbReference type="EC" id="2.3.1.200" evidence="1"/>
<dbReference type="EC" id="2.3.1.-" evidence="3 4"/>
<dbReference type="EMBL" id="AB006441">
    <property type="protein sequence ID" value="BAA24354.1"/>
    <property type="molecule type" value="mRNA"/>
</dbReference>
<dbReference type="RefSeq" id="NP_777220.1">
    <property type="nucleotide sequence ID" value="NM_174795.2"/>
</dbReference>
<dbReference type="RefSeq" id="XP_059747009.1">
    <property type="nucleotide sequence ID" value="XM_059891026.1"/>
</dbReference>
<dbReference type="PDB" id="2E5A">
    <property type="method" value="X-ray"/>
    <property type="resolution" value="2.10 A"/>
    <property type="chains" value="A=27-373"/>
</dbReference>
<dbReference type="PDB" id="3A7U">
    <property type="method" value="X-ray"/>
    <property type="resolution" value="3.44 A"/>
    <property type="chains" value="A=27-373"/>
</dbReference>
<dbReference type="PDBsum" id="2E5A"/>
<dbReference type="PDBsum" id="3A7U"/>
<dbReference type="SMR" id="O46419"/>
<dbReference type="FunCoup" id="O46419">
    <property type="interactions" value="1336"/>
</dbReference>
<dbReference type="STRING" id="9913.ENSBTAP00000005171"/>
<dbReference type="PaxDb" id="9913-ENSBTAP00000005171"/>
<dbReference type="Ensembl" id="ENSBTAT00000129635.1">
    <property type="protein sequence ID" value="ENSBTAP00000097487.1"/>
    <property type="gene ID" value="ENSBTAG00000059194.1"/>
</dbReference>
<dbReference type="GeneID" id="286864"/>
<dbReference type="KEGG" id="bta:286864"/>
<dbReference type="CTD" id="51601"/>
<dbReference type="VEuPathDB" id="HostDB:ENSBTAG00000003965"/>
<dbReference type="eggNOG" id="KOG3159">
    <property type="taxonomic scope" value="Eukaryota"/>
</dbReference>
<dbReference type="GeneTree" id="ENSGT00390000008846"/>
<dbReference type="HOGENOM" id="CLU_022986_4_1_1"/>
<dbReference type="InParanoid" id="O46419"/>
<dbReference type="OMA" id="RYQNWDW"/>
<dbReference type="OrthoDB" id="201621at2759"/>
<dbReference type="TreeFam" id="TF314085"/>
<dbReference type="BioCyc" id="MetaCyc:MONOMER-22198"/>
<dbReference type="BRENDA" id="2.3.1.181">
    <property type="organism ID" value="908"/>
</dbReference>
<dbReference type="Reactome" id="R-BTA-9857492">
    <property type="pathway name" value="Protein lipoylation"/>
</dbReference>
<dbReference type="UniPathway" id="UPA00537">
    <property type="reaction ID" value="UER00595"/>
</dbReference>
<dbReference type="EvolutionaryTrace" id="O46419"/>
<dbReference type="Proteomes" id="UP000009136">
    <property type="component" value="Chromosome 11"/>
</dbReference>
<dbReference type="Bgee" id="ENSBTAG00000003965">
    <property type="expression patterns" value="Expressed in oocyte and 105 other cell types or tissues"/>
</dbReference>
<dbReference type="GO" id="GO:0005737">
    <property type="term" value="C:cytoplasm"/>
    <property type="evidence" value="ECO:0000318"/>
    <property type="project" value="GO_Central"/>
</dbReference>
<dbReference type="GO" id="GO:0005739">
    <property type="term" value="C:mitochondrion"/>
    <property type="evidence" value="ECO:0000318"/>
    <property type="project" value="GO_Central"/>
</dbReference>
<dbReference type="GO" id="GO:0017118">
    <property type="term" value="F:lipoyltransferase activity"/>
    <property type="evidence" value="ECO:0000314"/>
    <property type="project" value="UniProtKB"/>
</dbReference>
<dbReference type="GO" id="GO:0016410">
    <property type="term" value="F:N-acyltransferase activity"/>
    <property type="evidence" value="ECO:0007669"/>
    <property type="project" value="Ensembl"/>
</dbReference>
<dbReference type="GO" id="GO:0036211">
    <property type="term" value="P:protein modification process"/>
    <property type="evidence" value="ECO:0007669"/>
    <property type="project" value="InterPro"/>
</dbReference>
<dbReference type="CDD" id="cd16443">
    <property type="entry name" value="LplA"/>
    <property type="match status" value="1"/>
</dbReference>
<dbReference type="FunFam" id="3.30.390.50:FF:000005">
    <property type="entry name" value="Lipoyltransferase 1, mitochondrial"/>
    <property type="match status" value="1"/>
</dbReference>
<dbReference type="FunFam" id="3.30.930.10:FF:000045">
    <property type="entry name" value="lipoyltransferase 1, mitochondrial"/>
    <property type="match status" value="1"/>
</dbReference>
<dbReference type="Gene3D" id="3.30.930.10">
    <property type="entry name" value="Bira Bifunctional Protein, Domain 2"/>
    <property type="match status" value="1"/>
</dbReference>
<dbReference type="Gene3D" id="3.30.390.50">
    <property type="entry name" value="CO dehydrogenase flavoprotein, C-terminal domain"/>
    <property type="match status" value="1"/>
</dbReference>
<dbReference type="InterPro" id="IPR045864">
    <property type="entry name" value="aa-tRNA-synth_II/BPL/LPL"/>
</dbReference>
<dbReference type="InterPro" id="IPR004143">
    <property type="entry name" value="BPL_LPL_catalytic"/>
</dbReference>
<dbReference type="InterPro" id="IPR004562">
    <property type="entry name" value="LipoylTrfase_LipoateP_Ligase"/>
</dbReference>
<dbReference type="NCBIfam" id="TIGR00545">
    <property type="entry name" value="lipoyltrans"/>
    <property type="match status" value="1"/>
</dbReference>
<dbReference type="PANTHER" id="PTHR12561">
    <property type="entry name" value="LIPOATE-PROTEIN LIGASE"/>
    <property type="match status" value="1"/>
</dbReference>
<dbReference type="PANTHER" id="PTHR12561:SF3">
    <property type="entry name" value="LIPOYLTRANSFERASE 1, MITOCHONDRIAL"/>
    <property type="match status" value="1"/>
</dbReference>
<dbReference type="Pfam" id="PF21948">
    <property type="entry name" value="LplA-B_cat"/>
    <property type="match status" value="1"/>
</dbReference>
<dbReference type="SUPFAM" id="SSF55681">
    <property type="entry name" value="Class II aaRS and biotin synthetases"/>
    <property type="match status" value="1"/>
</dbReference>
<dbReference type="PROSITE" id="PS51733">
    <property type="entry name" value="BPL_LPL_CATALYTIC"/>
    <property type="match status" value="1"/>
</dbReference>
<protein>
    <recommendedName>
        <fullName evidence="5">Lipoyl amidotransferase LIPT1, mitochondrial</fullName>
        <ecNumber evidence="1">2.3.1.200</ecNumber>
    </recommendedName>
    <alternativeName>
        <fullName>Lipoate biosynthesis protein</fullName>
    </alternativeName>
    <alternativeName>
        <fullName>Lipoate-protein ligase</fullName>
    </alternativeName>
    <alternativeName>
        <fullName>Lipoyl ligase</fullName>
    </alternativeName>
    <alternativeName>
        <fullName>Lipoyltransferase 1</fullName>
        <ecNumber evidence="3 4">2.3.1.-</ecNumber>
    </alternativeName>
</protein>
<feature type="transit peptide" description="Mitochondrion">
    <location>
        <begin position="1"/>
        <end position="25"/>
    </location>
</feature>
<feature type="chain" id="PRO_0000017855" description="Lipoyl amidotransferase LIPT1, mitochondrial">
    <location>
        <begin position="26"/>
        <end position="373"/>
    </location>
</feature>
<feature type="domain" description="BPL/LPL catalytic" evidence="2">
    <location>
        <begin position="57"/>
        <end position="243"/>
    </location>
</feature>
<feature type="binding site" evidence="3 7">
    <location>
        <position position="107"/>
    </location>
    <ligand>
        <name>(R)-lipoyl-5'-AMP</name>
        <dbReference type="ChEBI" id="CHEBI:83091"/>
    </ligand>
</feature>
<feature type="binding site" evidence="3 7">
    <location>
        <position position="151"/>
    </location>
    <ligand>
        <name>(R)-lipoyl-5'-AMP</name>
        <dbReference type="ChEBI" id="CHEBI:83091"/>
    </ligand>
</feature>
<feature type="binding site" evidence="3 7">
    <location>
        <position position="161"/>
    </location>
    <ligand>
        <name>(R)-lipoyl-5'-AMP</name>
        <dbReference type="ChEBI" id="CHEBI:83091"/>
    </ligand>
</feature>
<feature type="binding site" evidence="3 7">
    <location>
        <position position="179"/>
    </location>
    <ligand>
        <name>(R)-lipoyl-5'-AMP</name>
        <dbReference type="ChEBI" id="CHEBI:83091"/>
    </ligand>
</feature>
<feature type="binding site" evidence="3 7">
    <location>
        <position position="208"/>
    </location>
    <ligand>
        <name>(R)-lipoyl-5'-AMP</name>
        <dbReference type="ChEBI" id="CHEBI:83091"/>
    </ligand>
</feature>
<feature type="binding site" evidence="3 7">
    <location>
        <position position="210"/>
    </location>
    <ligand>
        <name>(R)-lipoyl-5'-AMP</name>
        <dbReference type="ChEBI" id="CHEBI:83091"/>
    </ligand>
</feature>
<feature type="strand" evidence="8">
    <location>
        <begin position="32"/>
        <end position="37"/>
    </location>
</feature>
<feature type="helix" evidence="8">
    <location>
        <begin position="41"/>
        <end position="54"/>
    </location>
</feature>
<feature type="strand" evidence="8">
    <location>
        <begin position="62"/>
        <end position="66"/>
    </location>
</feature>
<feature type="strand" evidence="8">
    <location>
        <begin position="69"/>
        <end position="74"/>
    </location>
</feature>
<feature type="helix" evidence="8">
    <location>
        <begin position="80"/>
        <end position="83"/>
    </location>
</feature>
<feature type="helix" evidence="8">
    <location>
        <begin position="86"/>
        <end position="90"/>
    </location>
</feature>
<feature type="turn" evidence="8">
    <location>
        <begin position="91"/>
        <end position="93"/>
    </location>
</feature>
<feature type="strand" evidence="8">
    <location>
        <begin position="95"/>
        <end position="98"/>
    </location>
</feature>
<feature type="strand" evidence="8">
    <location>
        <begin position="106"/>
        <end position="108"/>
    </location>
</feature>
<feature type="strand" evidence="8">
    <location>
        <begin position="112"/>
        <end position="119"/>
    </location>
</feature>
<feature type="helix" evidence="8">
    <location>
        <begin position="121"/>
        <end position="123"/>
    </location>
</feature>
<feature type="helix" evidence="8">
    <location>
        <begin position="126"/>
        <end position="140"/>
    </location>
</feature>
<feature type="strand" evidence="9">
    <location>
        <begin position="141"/>
        <end position="143"/>
    </location>
</feature>
<feature type="strand" evidence="8">
    <location>
        <begin position="146"/>
        <end position="148"/>
    </location>
</feature>
<feature type="strand" evidence="9">
    <location>
        <begin position="150"/>
        <end position="152"/>
    </location>
</feature>
<feature type="strand" evidence="8">
    <location>
        <begin position="154"/>
        <end position="156"/>
    </location>
</feature>
<feature type="turn" evidence="8">
    <location>
        <begin position="157"/>
        <end position="159"/>
    </location>
</feature>
<feature type="strand" evidence="8">
    <location>
        <begin position="160"/>
        <end position="163"/>
    </location>
</feature>
<feature type="strand" evidence="8">
    <location>
        <begin position="165"/>
        <end position="169"/>
    </location>
</feature>
<feature type="strand" evidence="8">
    <location>
        <begin position="174"/>
        <end position="183"/>
    </location>
</feature>
<feature type="helix" evidence="8">
    <location>
        <begin position="186"/>
        <end position="192"/>
    </location>
</feature>
<feature type="strand" evidence="8">
    <location>
        <begin position="199"/>
        <end position="202"/>
    </location>
</feature>
<feature type="helix" evidence="8">
    <location>
        <begin position="215"/>
        <end position="218"/>
    </location>
</feature>
<feature type="helix" evidence="8">
    <location>
        <begin position="224"/>
        <end position="239"/>
    </location>
</feature>
<feature type="strand" evidence="8">
    <location>
        <begin position="246"/>
        <end position="248"/>
    </location>
</feature>
<feature type="turn" evidence="8">
    <location>
        <begin position="253"/>
        <end position="255"/>
    </location>
</feature>
<feature type="helix" evidence="8">
    <location>
        <begin position="259"/>
        <end position="267"/>
    </location>
</feature>
<feature type="helix" evidence="8">
    <location>
        <begin position="269"/>
        <end position="272"/>
    </location>
</feature>
<feature type="turn" evidence="8">
    <location>
        <begin position="273"/>
        <end position="275"/>
    </location>
</feature>
<feature type="strand" evidence="8">
    <location>
        <begin position="279"/>
        <end position="288"/>
    </location>
</feature>
<feature type="strand" evidence="8">
    <location>
        <begin position="293"/>
        <end position="303"/>
    </location>
</feature>
<feature type="strand" evidence="8">
    <location>
        <begin position="306"/>
        <end position="313"/>
    </location>
</feature>
<feature type="turn" evidence="8">
    <location>
        <begin position="316"/>
        <end position="318"/>
    </location>
</feature>
<feature type="helix" evidence="8">
    <location>
        <begin position="321"/>
        <end position="331"/>
    </location>
</feature>
<feature type="strand" evidence="8">
    <location>
        <begin position="334"/>
        <end position="336"/>
    </location>
</feature>
<feature type="helix" evidence="9">
    <location>
        <begin position="341"/>
        <end position="349"/>
    </location>
</feature>
<feature type="helix" evidence="8">
    <location>
        <begin position="357"/>
        <end position="370"/>
    </location>
</feature>
<evidence type="ECO:0000250" key="1">
    <source>
        <dbReference type="UniProtKB" id="Q9Y234"/>
    </source>
</evidence>
<evidence type="ECO:0000255" key="2">
    <source>
        <dbReference type="PROSITE-ProRule" id="PRU01067"/>
    </source>
</evidence>
<evidence type="ECO:0000269" key="3">
    <source>
    </source>
</evidence>
<evidence type="ECO:0000269" key="4">
    <source>
    </source>
</evidence>
<evidence type="ECO:0000305" key="5"/>
<evidence type="ECO:0000305" key="6">
    <source>
    </source>
</evidence>
<evidence type="ECO:0007744" key="7">
    <source>
        <dbReference type="PDB" id="2E5A"/>
    </source>
</evidence>
<evidence type="ECO:0007829" key="8">
    <source>
        <dbReference type="PDB" id="2E5A"/>
    </source>
</evidence>
<evidence type="ECO:0007829" key="9">
    <source>
        <dbReference type="PDB" id="3A7U"/>
    </source>
</evidence>